<feature type="signal peptide" evidence="2">
    <location>
        <begin position="1"/>
        <end position="22"/>
    </location>
</feature>
<feature type="chain" id="PRO_0000024855" description="Putative pectate lyase X">
    <location>
        <begin position="23"/>
        <end position="238"/>
    </location>
</feature>
<feature type="binding site" evidence="1">
    <location>
        <position position="153"/>
    </location>
    <ligand>
        <name>Ca(2+)</name>
        <dbReference type="ChEBI" id="CHEBI:29108"/>
    </ligand>
</feature>
<feature type="binding site" evidence="1">
    <location>
        <position position="188"/>
    </location>
    <ligand>
        <name>Ca(2+)</name>
        <dbReference type="ChEBI" id="CHEBI:29108"/>
    </ligand>
</feature>
<feature type="binding site" evidence="1">
    <location>
        <position position="192"/>
    </location>
    <ligand>
        <name>Ca(2+)</name>
        <dbReference type="ChEBI" id="CHEBI:29108"/>
    </ligand>
</feature>
<sequence length="238" mass="26094">MKYLLPTAAAGLLLLAAQPAMAANTGGYATTDGGEVSGAVKKTARSMKEIVDIIEAAQVDSKGKKVKGGAYPLIITYSGNEDSLIKAAEKNICGQWSKDARGVQIKEFTKGTYYPGHQWLIRQLRCLDCETLLTLWYVICALAICQAARKHGDAIRIDNSPNVWIDHNEIFAKNFECKGTPDNDTTFESAVDIKKGSTNVTVSVSVKEVGTLVNLSRLFFPFRIQRYRAFRLPVSCLP</sequence>
<protein>
    <recommendedName>
        <fullName>Putative pectate lyase X</fullName>
        <ecNumber>4.2.2.2</ecNumber>
    </recommendedName>
</protein>
<evidence type="ECO:0000250" key="1"/>
<evidence type="ECO:0000255" key="2"/>
<evidence type="ECO:0000305" key="3"/>
<gene>
    <name type="primary">PEL X</name>
</gene>
<proteinExistence type="evidence at transcript level"/>
<dbReference type="EC" id="4.2.2.2"/>
<dbReference type="EMBL" id="D00218">
    <property type="protein sequence ID" value="BAA00156.1"/>
    <property type="molecule type" value="Genomic_DNA"/>
</dbReference>
<dbReference type="SMR" id="P16530"/>
<dbReference type="CAZy" id="PL1">
    <property type="family name" value="Polysaccharide Lyase Family 1"/>
</dbReference>
<dbReference type="UniPathway" id="UPA00545">
    <property type="reaction ID" value="UER00824"/>
</dbReference>
<dbReference type="GO" id="GO:0046872">
    <property type="term" value="F:metal ion binding"/>
    <property type="evidence" value="ECO:0007669"/>
    <property type="project" value="UniProtKB-KW"/>
</dbReference>
<dbReference type="GO" id="GO:0030570">
    <property type="term" value="F:pectate lyase activity"/>
    <property type="evidence" value="ECO:0007669"/>
    <property type="project" value="UniProtKB-EC"/>
</dbReference>
<dbReference type="GO" id="GO:0045490">
    <property type="term" value="P:pectin catabolic process"/>
    <property type="evidence" value="ECO:0007669"/>
    <property type="project" value="UniProtKB-UniPathway"/>
</dbReference>
<dbReference type="Gene3D" id="2.160.20.10">
    <property type="entry name" value="Single-stranded right-handed beta-helix, Pectin lyase-like"/>
    <property type="match status" value="1"/>
</dbReference>
<dbReference type="InterPro" id="IPR002022">
    <property type="entry name" value="Pec_lyase"/>
</dbReference>
<dbReference type="InterPro" id="IPR012334">
    <property type="entry name" value="Pectin_lyas_fold"/>
</dbReference>
<dbReference type="InterPro" id="IPR011050">
    <property type="entry name" value="Pectin_lyase_fold/virulence"/>
</dbReference>
<dbReference type="Pfam" id="PF00544">
    <property type="entry name" value="Pectate_lyase_4"/>
    <property type="match status" value="1"/>
</dbReference>
<dbReference type="SMART" id="SM00656">
    <property type="entry name" value="Amb_all"/>
    <property type="match status" value="1"/>
</dbReference>
<dbReference type="SUPFAM" id="SSF51126">
    <property type="entry name" value="Pectin lyase-like"/>
    <property type="match status" value="1"/>
</dbReference>
<organism>
    <name type="scientific">Pectobacterium carotovorum</name>
    <name type="common">Erwinia carotovora</name>
    <dbReference type="NCBI Taxonomy" id="554"/>
    <lineage>
        <taxon>Bacteria</taxon>
        <taxon>Pseudomonadati</taxon>
        <taxon>Pseudomonadota</taxon>
        <taxon>Gammaproteobacteria</taxon>
        <taxon>Enterobacterales</taxon>
        <taxon>Pectobacteriaceae</taxon>
        <taxon>Pectobacterium</taxon>
    </lineage>
</organism>
<comment type="function">
    <text>Involved in maceration and soft-rotting of plant tissue.</text>
</comment>
<comment type="catalytic activity">
    <reaction>
        <text>Eliminative cleavage of (1-&gt;4)-alpha-D-galacturonan to give oligosaccharides with 4-deoxy-alpha-D-galact-4-enuronosyl groups at their non-reducing ends.</text>
        <dbReference type="EC" id="4.2.2.2"/>
    </reaction>
</comment>
<comment type="cofactor">
    <cofactor evidence="1">
        <name>Ca(2+)</name>
        <dbReference type="ChEBI" id="CHEBI:29108"/>
    </cofactor>
    <text evidence="1">Binds 1 Ca(2+) ion per subunit.</text>
</comment>
<comment type="pathway">
    <text>Glycan metabolism; pectin degradation; 2-dehydro-3-deoxy-D-gluconate from pectin: step 2/5.</text>
</comment>
<comment type="induction">
    <text>By pectin.</text>
</comment>
<comment type="similarity">
    <text evidence="3">Belongs to the polysaccharide lyase 1 family.</text>
</comment>
<reference key="1">
    <citation type="journal article" date="1988" name="Agric. Biol. Chem.">
        <title>DNA structure of pectate lyase I gene cloned from Erwinia carotovora.</title>
        <authorList>
            <person name="Ito K."/>
            <person name="Kobayashi R."/>
            <person name="Nikaido N."/>
            <person name="Izaki K."/>
        </authorList>
    </citation>
    <scope>NUCLEOTIDE SEQUENCE [GENOMIC DNA]</scope>
    <source>
        <strain>Er 18</strain>
    </source>
</reference>
<keyword id="KW-0106">Calcium</keyword>
<keyword id="KW-0456">Lyase</keyword>
<keyword id="KW-0479">Metal-binding</keyword>
<keyword id="KW-0732">Signal</keyword>
<name>PLYX_PECCA</name>
<accession>P16530</accession>